<sequence length="171" mass="18168">MSDFKRSKANNNTEELIEKIVFINRVAKVVKGGRRFSFSAIVVVGDGNGKVGYGLGKANQVPEAIRKGVERARKDMALVSLTDVSIPHQVIGHYGAGRVFLRPASAGTGLIAGGPVRAVLEAAGVSNILTKCLGSHNPHNMVKATIDGLKQLRSAQKIAELRGKNVEEITA</sequence>
<proteinExistence type="inferred from homology"/>
<protein>
    <recommendedName>
        <fullName evidence="1">Small ribosomal subunit protein uS5</fullName>
    </recommendedName>
    <alternativeName>
        <fullName evidence="2">30S ribosomal protein S5</fullName>
    </alternativeName>
</protein>
<gene>
    <name evidence="1" type="primary">rpsE</name>
    <name type="ordered locus">DP1142</name>
</gene>
<feature type="chain" id="PRO_0000131509" description="Small ribosomal subunit protein uS5">
    <location>
        <begin position="1"/>
        <end position="171"/>
    </location>
</feature>
<feature type="domain" description="S5 DRBM" evidence="1">
    <location>
        <begin position="16"/>
        <end position="79"/>
    </location>
</feature>
<name>RS5_DESPS</name>
<organism>
    <name type="scientific">Desulfotalea psychrophila (strain LSv54 / DSM 12343)</name>
    <dbReference type="NCBI Taxonomy" id="177439"/>
    <lineage>
        <taxon>Bacteria</taxon>
        <taxon>Pseudomonadati</taxon>
        <taxon>Thermodesulfobacteriota</taxon>
        <taxon>Desulfobulbia</taxon>
        <taxon>Desulfobulbales</taxon>
        <taxon>Desulfocapsaceae</taxon>
        <taxon>Desulfotalea</taxon>
    </lineage>
</organism>
<dbReference type="EMBL" id="CR522870">
    <property type="protein sequence ID" value="CAG35871.1"/>
    <property type="molecule type" value="Genomic_DNA"/>
</dbReference>
<dbReference type="RefSeq" id="WP_011188383.1">
    <property type="nucleotide sequence ID" value="NC_006138.1"/>
</dbReference>
<dbReference type="SMR" id="Q6AP53"/>
<dbReference type="STRING" id="177439.DP1142"/>
<dbReference type="KEGG" id="dps:DP1142"/>
<dbReference type="eggNOG" id="COG0098">
    <property type="taxonomic scope" value="Bacteria"/>
</dbReference>
<dbReference type="HOGENOM" id="CLU_065898_2_2_7"/>
<dbReference type="OrthoDB" id="9809045at2"/>
<dbReference type="Proteomes" id="UP000000602">
    <property type="component" value="Chromosome"/>
</dbReference>
<dbReference type="GO" id="GO:0015935">
    <property type="term" value="C:small ribosomal subunit"/>
    <property type="evidence" value="ECO:0007669"/>
    <property type="project" value="InterPro"/>
</dbReference>
<dbReference type="GO" id="GO:0019843">
    <property type="term" value="F:rRNA binding"/>
    <property type="evidence" value="ECO:0007669"/>
    <property type="project" value="UniProtKB-UniRule"/>
</dbReference>
<dbReference type="GO" id="GO:0003735">
    <property type="term" value="F:structural constituent of ribosome"/>
    <property type="evidence" value="ECO:0007669"/>
    <property type="project" value="InterPro"/>
</dbReference>
<dbReference type="GO" id="GO:0006412">
    <property type="term" value="P:translation"/>
    <property type="evidence" value="ECO:0007669"/>
    <property type="project" value="UniProtKB-UniRule"/>
</dbReference>
<dbReference type="FunFam" id="3.30.160.20:FF:000001">
    <property type="entry name" value="30S ribosomal protein S5"/>
    <property type="match status" value="1"/>
</dbReference>
<dbReference type="FunFam" id="3.30.230.10:FF:000002">
    <property type="entry name" value="30S ribosomal protein S5"/>
    <property type="match status" value="1"/>
</dbReference>
<dbReference type="Gene3D" id="3.30.160.20">
    <property type="match status" value="1"/>
</dbReference>
<dbReference type="Gene3D" id="3.30.230.10">
    <property type="match status" value="1"/>
</dbReference>
<dbReference type="HAMAP" id="MF_01307_B">
    <property type="entry name" value="Ribosomal_uS5_B"/>
    <property type="match status" value="1"/>
</dbReference>
<dbReference type="InterPro" id="IPR020568">
    <property type="entry name" value="Ribosomal_Su5_D2-typ_SF"/>
</dbReference>
<dbReference type="InterPro" id="IPR000851">
    <property type="entry name" value="Ribosomal_uS5"/>
</dbReference>
<dbReference type="InterPro" id="IPR005712">
    <property type="entry name" value="Ribosomal_uS5_bac-type"/>
</dbReference>
<dbReference type="InterPro" id="IPR005324">
    <property type="entry name" value="Ribosomal_uS5_C"/>
</dbReference>
<dbReference type="InterPro" id="IPR013810">
    <property type="entry name" value="Ribosomal_uS5_N"/>
</dbReference>
<dbReference type="InterPro" id="IPR018192">
    <property type="entry name" value="Ribosomal_uS5_N_CS"/>
</dbReference>
<dbReference type="InterPro" id="IPR014721">
    <property type="entry name" value="Ribsml_uS5_D2-typ_fold_subgr"/>
</dbReference>
<dbReference type="NCBIfam" id="TIGR01021">
    <property type="entry name" value="rpsE_bact"/>
    <property type="match status" value="1"/>
</dbReference>
<dbReference type="PANTHER" id="PTHR48277">
    <property type="entry name" value="MITOCHONDRIAL RIBOSOMAL PROTEIN S5"/>
    <property type="match status" value="1"/>
</dbReference>
<dbReference type="PANTHER" id="PTHR48277:SF1">
    <property type="entry name" value="MITOCHONDRIAL RIBOSOMAL PROTEIN S5"/>
    <property type="match status" value="1"/>
</dbReference>
<dbReference type="Pfam" id="PF00333">
    <property type="entry name" value="Ribosomal_S5"/>
    <property type="match status" value="1"/>
</dbReference>
<dbReference type="Pfam" id="PF03719">
    <property type="entry name" value="Ribosomal_S5_C"/>
    <property type="match status" value="1"/>
</dbReference>
<dbReference type="SUPFAM" id="SSF54768">
    <property type="entry name" value="dsRNA-binding domain-like"/>
    <property type="match status" value="1"/>
</dbReference>
<dbReference type="SUPFAM" id="SSF54211">
    <property type="entry name" value="Ribosomal protein S5 domain 2-like"/>
    <property type="match status" value="1"/>
</dbReference>
<dbReference type="PROSITE" id="PS00585">
    <property type="entry name" value="RIBOSOMAL_S5"/>
    <property type="match status" value="1"/>
</dbReference>
<dbReference type="PROSITE" id="PS50881">
    <property type="entry name" value="S5_DSRBD"/>
    <property type="match status" value="1"/>
</dbReference>
<accession>Q6AP53</accession>
<comment type="function">
    <text evidence="1">With S4 and S12 plays an important role in translational accuracy.</text>
</comment>
<comment type="function">
    <text evidence="1">Located at the back of the 30S subunit body where it stabilizes the conformation of the head with respect to the body.</text>
</comment>
<comment type="subunit">
    <text evidence="1">Part of the 30S ribosomal subunit. Contacts proteins S4 and S8.</text>
</comment>
<comment type="domain">
    <text>The N-terminal domain interacts with the head of the 30S subunit; the C-terminal domain interacts with the body and contacts protein S4. The interaction surface between S4 and S5 is involved in control of translational fidelity.</text>
</comment>
<comment type="similarity">
    <text evidence="1">Belongs to the universal ribosomal protein uS5 family.</text>
</comment>
<keyword id="KW-1185">Reference proteome</keyword>
<keyword id="KW-0687">Ribonucleoprotein</keyword>
<keyword id="KW-0689">Ribosomal protein</keyword>
<keyword id="KW-0694">RNA-binding</keyword>
<keyword id="KW-0699">rRNA-binding</keyword>
<reference key="1">
    <citation type="journal article" date="2004" name="Environ. Microbiol.">
        <title>The genome of Desulfotalea psychrophila, a sulfate-reducing bacterium from permanently cold Arctic sediments.</title>
        <authorList>
            <person name="Rabus R."/>
            <person name="Ruepp A."/>
            <person name="Frickey T."/>
            <person name="Rattei T."/>
            <person name="Fartmann B."/>
            <person name="Stark M."/>
            <person name="Bauer M."/>
            <person name="Zibat A."/>
            <person name="Lombardot T."/>
            <person name="Becker I."/>
            <person name="Amann J."/>
            <person name="Gellner K."/>
            <person name="Teeling H."/>
            <person name="Leuschner W.D."/>
            <person name="Gloeckner F.-O."/>
            <person name="Lupas A.N."/>
            <person name="Amann R."/>
            <person name="Klenk H.-P."/>
        </authorList>
    </citation>
    <scope>NUCLEOTIDE SEQUENCE [LARGE SCALE GENOMIC DNA]</scope>
    <source>
        <strain>DSM 12343 / LSv54</strain>
    </source>
</reference>
<evidence type="ECO:0000255" key="1">
    <source>
        <dbReference type="HAMAP-Rule" id="MF_01307"/>
    </source>
</evidence>
<evidence type="ECO:0000305" key="2"/>